<organism>
    <name type="scientific">Chlamydomonas moewusii</name>
    <name type="common">Chlamydomonas eugametos</name>
    <dbReference type="NCBI Taxonomy" id="3054"/>
    <lineage>
        <taxon>Eukaryota</taxon>
        <taxon>Viridiplantae</taxon>
        <taxon>Chlorophyta</taxon>
        <taxon>core chlorophytes</taxon>
        <taxon>Chlorophyceae</taxon>
        <taxon>CS clade</taxon>
        <taxon>Chlamydomonadales</taxon>
        <taxon>Chlamydomonadaceae</taxon>
        <taxon>Chlamydomonas</taxon>
    </lineage>
</organism>
<comment type="function">
    <text>The light-harvesting complex (LHC) functions as a light receptor, it captures and delivers excitation energy to photosystems with which it is closely associated.</text>
</comment>
<comment type="cofactor">
    <text evidence="1">Binds at least 14 chlorophylls (8 Chl-a and 6 Chl-b) and carotenoids such as lutein and neoxanthin.</text>
</comment>
<comment type="subunit">
    <text>The LHC complex consists of chlorophyll a-b binding proteins.</text>
</comment>
<comment type="subcellular location">
    <subcellularLocation>
        <location>Plastid</location>
        <location>Chloroplast thylakoid membrane</location>
        <topology>Multi-pass membrane protein</topology>
    </subcellularLocation>
</comment>
<comment type="domain">
    <text>The N-terminus of the protein extends into the stroma where it is involved with adhesion of granal membranes and post-translational modifications; both are believed to mediate the distribution of excitation energy between photosystems I and II.</text>
</comment>
<comment type="PTM">
    <text evidence="1">Photoregulated by reversible phosphorylation of its threonine residues.</text>
</comment>
<comment type="similarity">
    <text evidence="5">Belongs to the light-harvesting chlorophyll a/b-binding (LHC) protein family.</text>
</comment>
<evidence type="ECO:0000250" key="1"/>
<evidence type="ECO:0000250" key="2">
    <source>
        <dbReference type="UniProtKB" id="P07371"/>
    </source>
</evidence>
<evidence type="ECO:0000250" key="3">
    <source>
        <dbReference type="UniProtKB" id="P12333"/>
    </source>
</evidence>
<evidence type="ECO:0000255" key="4"/>
<evidence type="ECO:0000305" key="5"/>
<reference key="1">
    <citation type="journal article" date="1991" name="Curr. Genet.">
        <title>Characterization of a cDNA encoding a PSII-associated chlorophyll a/b-binding protein (CAB) from Chlamydomonas moewusii fitting into neither type I nor type II.</title>
        <authorList>
            <person name="Larouche L."/>
            <person name="Tremblay C."/>
            <person name="Simard C."/>
            <person name="Bellemare G."/>
        </authorList>
    </citation>
    <scope>NUCLEOTIDE SEQUENCE [MRNA]</scope>
</reference>
<accession>P22686</accession>
<sequence length="256" mass="27128">MAFALISNRALTVKVEAAKKAAGTKQTKAAPAKSAGIEWYGPDRAKWLGPFSTNTPAYLTGEFPGDYGWDTAGLSADPETFKKYRELEVIHARWALLGALGILTPELLSTYAGVKFGEPVWFKAGAQIFSEGGLDYLGSPALIHAQNIVATLAVQVVLMGLIEGYRVNGGPAGEGLDPLYPGESFDPLGLADDPDTFAELKVKEIKNGRLAMFSCFGFFVQAIVTGKGPIQNLADHLADPGTNNAFAAATKFTPSA</sequence>
<proteinExistence type="evidence at transcript level"/>
<name>CB2_CHLMO</name>
<protein>
    <recommendedName>
        <fullName>Chlorophyll a-b binding protein of LHCII type I, chloroplastic</fullName>
        <shortName>CAB</shortName>
        <shortName>LHCP</shortName>
    </recommendedName>
</protein>
<feature type="transit peptide" description="Chloroplast" evidence="5">
    <location>
        <begin position="1"/>
        <end position="23"/>
    </location>
</feature>
<feature type="chain" id="PRO_0000003654" description="Chlorophyll a-b binding protein of LHCII type I, chloroplastic">
    <location>
        <begin position="24"/>
        <end position="256"/>
    </location>
</feature>
<feature type="transmembrane region" description="Helical" evidence="4">
    <location>
        <begin position="94"/>
        <end position="114"/>
    </location>
</feature>
<feature type="transmembrane region" description="Helical" evidence="4">
    <location>
        <begin position="142"/>
        <end position="162"/>
    </location>
</feature>
<feature type="transmembrane region" description="Helical" evidence="4">
    <location>
        <begin position="210"/>
        <end position="230"/>
    </location>
</feature>
<feature type="binding site" description="axial binding residue" evidence="1">
    <location>
        <position position="47"/>
    </location>
    <ligand>
        <name>chlorophyll b</name>
        <dbReference type="ChEBI" id="CHEBI:61721"/>
        <label>1</label>
    </ligand>
    <ligandPart>
        <name>Mg</name>
        <dbReference type="ChEBI" id="CHEBI:25107"/>
    </ligandPart>
</feature>
<feature type="binding site" evidence="1">
    <location>
        <position position="69"/>
    </location>
    <ligand>
        <name>chlorophyll a</name>
        <dbReference type="ChEBI" id="CHEBI:58416"/>
        <label>1</label>
    </ligand>
</feature>
<feature type="binding site" evidence="1">
    <location>
        <position position="75"/>
    </location>
    <ligand>
        <name>chlorophyll a</name>
        <dbReference type="ChEBI" id="CHEBI:58416"/>
        <label>1</label>
    </ligand>
</feature>
<feature type="binding site" description="axial binding residue" evidence="3">
    <location>
        <position position="88"/>
    </location>
    <ligand>
        <name>chlorophyll a</name>
        <dbReference type="ChEBI" id="CHEBI:58416"/>
        <label>1</label>
    </ligand>
    <ligandPart>
        <name>Mg</name>
        <dbReference type="ChEBI" id="CHEBI:25107"/>
    </ligandPart>
</feature>
<feature type="binding site" description="axial binding residue" evidence="3">
    <location>
        <position position="91"/>
    </location>
    <ligand>
        <name>chlorophyll a</name>
        <dbReference type="ChEBI" id="CHEBI:58416"/>
        <label>2</label>
    </ligand>
    <ligandPart>
        <name>Mg</name>
        <dbReference type="ChEBI" id="CHEBI:25107"/>
    </ligandPart>
</feature>
<feature type="binding site" evidence="1">
    <location>
        <position position="93"/>
    </location>
    <ligand>
        <name>chlorophyll b</name>
        <dbReference type="ChEBI" id="CHEBI:61721"/>
        <label>2</label>
    </ligand>
</feature>
<feature type="binding site" evidence="1">
    <location>
        <position position="127"/>
    </location>
    <ligand>
        <name>chlorophyll a</name>
        <dbReference type="ChEBI" id="CHEBI:58416"/>
        <label>3</label>
    </ligand>
</feature>
<feature type="binding site" evidence="1">
    <location>
        <position position="137"/>
    </location>
    <ligand>
        <name>chlorophyll a</name>
        <dbReference type="ChEBI" id="CHEBI:58416"/>
        <label>3</label>
    </ligand>
</feature>
<feature type="binding site" description="axial binding residue" evidence="1">
    <location>
        <position position="143"/>
    </location>
    <ligand>
        <name>chlorophyll b</name>
        <dbReference type="ChEBI" id="CHEBI:61721"/>
        <label>2</label>
    </ligand>
    <ligandPart>
        <name>Mg</name>
        <dbReference type="ChEBI" id="CHEBI:25107"/>
    </ligandPart>
</feature>
<feature type="binding site" evidence="1">
    <location>
        <position position="155"/>
    </location>
    <ligand>
        <name>chlorophyll b</name>
        <dbReference type="ChEBI" id="CHEBI:61721"/>
        <label>4</label>
    </ligand>
</feature>
<feature type="binding site" evidence="2">
    <location>
        <position position="155"/>
    </location>
    <ligand>
        <name>chlorophyll b</name>
        <dbReference type="ChEBI" id="CHEBI:61721"/>
        <label>5</label>
    </ligand>
</feature>
<feature type="binding site" description="axial binding residue" evidence="3">
    <location>
        <position position="163"/>
    </location>
    <ligand>
        <name>chlorophyll b</name>
        <dbReference type="ChEBI" id="CHEBI:61721"/>
        <label>3</label>
    </ligand>
    <ligandPart>
        <name>Mg</name>
        <dbReference type="ChEBI" id="CHEBI:25107"/>
    </ligandPart>
</feature>
<feature type="binding site" evidence="1">
    <location>
        <position position="166"/>
    </location>
    <ligand>
        <name>chlorophyll b</name>
        <dbReference type="ChEBI" id="CHEBI:61721"/>
        <label>4</label>
    </ligand>
</feature>
<feature type="binding site" evidence="1">
    <location>
        <position position="203"/>
    </location>
    <ligand>
        <name>chlorophyll a</name>
        <dbReference type="ChEBI" id="CHEBI:58416"/>
        <label>5</label>
    </ligand>
</feature>
<feature type="binding site" description="axial binding residue" evidence="3">
    <location>
        <position position="204"/>
    </location>
    <ligand>
        <name>chlorophyll a</name>
        <dbReference type="ChEBI" id="CHEBI:58416"/>
        <label>3</label>
    </ligand>
    <ligandPart>
        <name>Mg</name>
        <dbReference type="ChEBI" id="CHEBI:25107"/>
    </ligandPart>
</feature>
<feature type="binding site" description="axial binding residue" evidence="3">
    <location>
        <position position="207"/>
    </location>
    <ligand>
        <name>chlorophyll a</name>
        <dbReference type="ChEBI" id="CHEBI:58416"/>
        <label>4</label>
    </ligand>
    <ligandPart>
        <name>Mg</name>
        <dbReference type="ChEBI" id="CHEBI:25107"/>
    </ligandPart>
</feature>
<feature type="binding site" evidence="1">
    <location>
        <position position="209"/>
    </location>
    <ligand>
        <name>chlorophyll a</name>
        <dbReference type="ChEBI" id="CHEBI:58416"/>
        <label>1</label>
    </ligand>
</feature>
<feature type="binding site" description="axial binding residue" evidence="3">
    <location>
        <position position="221"/>
    </location>
    <ligand>
        <name>chlorophyll a</name>
        <dbReference type="ChEBI" id="CHEBI:58416"/>
        <label>5</label>
    </ligand>
    <ligandPart>
        <name>Mg</name>
        <dbReference type="ChEBI" id="CHEBI:25107"/>
    </ligandPart>
</feature>
<feature type="binding site" description="axial binding residue" evidence="3">
    <location>
        <position position="236"/>
    </location>
    <ligand>
        <name>chlorophyll a</name>
        <dbReference type="ChEBI" id="CHEBI:58416"/>
        <label>6</label>
    </ligand>
    <ligandPart>
        <name>Mg</name>
        <dbReference type="ChEBI" id="CHEBI:25107"/>
    </ligandPart>
</feature>
<feature type="binding site" evidence="1">
    <location>
        <position position="245"/>
    </location>
    <ligand>
        <name>chlorophyll a</name>
        <dbReference type="ChEBI" id="CHEBI:58416"/>
        <label>6</label>
    </ligand>
</feature>
<feature type="binding site" evidence="1">
    <location>
        <position position="252"/>
    </location>
    <ligand>
        <name>chlorophyll b</name>
        <dbReference type="ChEBI" id="CHEBI:61721"/>
        <label>5</label>
    </ligand>
</feature>
<keyword id="KW-0148">Chlorophyll</keyword>
<keyword id="KW-0150">Chloroplast</keyword>
<keyword id="KW-0157">Chromophore</keyword>
<keyword id="KW-0460">Magnesium</keyword>
<keyword id="KW-0472">Membrane</keyword>
<keyword id="KW-0479">Metal-binding</keyword>
<keyword id="KW-0597">Phosphoprotein</keyword>
<keyword id="KW-0602">Photosynthesis</keyword>
<keyword id="KW-0603">Photosystem I</keyword>
<keyword id="KW-0604">Photosystem II</keyword>
<keyword id="KW-0934">Plastid</keyword>
<keyword id="KW-0793">Thylakoid</keyword>
<keyword id="KW-0809">Transit peptide</keyword>
<keyword id="KW-0812">Transmembrane</keyword>
<keyword id="KW-1133">Transmembrane helix</keyword>
<dbReference type="EMBL" id="X54856">
    <property type="protein sequence ID" value="CAA38635.1"/>
    <property type="molecule type" value="mRNA"/>
</dbReference>
<dbReference type="PIR" id="S14518">
    <property type="entry name" value="S14518"/>
</dbReference>
<dbReference type="SMR" id="P22686"/>
<dbReference type="GO" id="GO:0009535">
    <property type="term" value="C:chloroplast thylakoid membrane"/>
    <property type="evidence" value="ECO:0007669"/>
    <property type="project" value="UniProtKB-SubCell"/>
</dbReference>
<dbReference type="GO" id="GO:0009522">
    <property type="term" value="C:photosystem I"/>
    <property type="evidence" value="ECO:0007669"/>
    <property type="project" value="UniProtKB-KW"/>
</dbReference>
<dbReference type="GO" id="GO:0009523">
    <property type="term" value="C:photosystem II"/>
    <property type="evidence" value="ECO:0007669"/>
    <property type="project" value="UniProtKB-KW"/>
</dbReference>
<dbReference type="GO" id="GO:0016168">
    <property type="term" value="F:chlorophyll binding"/>
    <property type="evidence" value="ECO:0007669"/>
    <property type="project" value="UniProtKB-KW"/>
</dbReference>
<dbReference type="GO" id="GO:0046872">
    <property type="term" value="F:metal ion binding"/>
    <property type="evidence" value="ECO:0007669"/>
    <property type="project" value="UniProtKB-KW"/>
</dbReference>
<dbReference type="GO" id="GO:0009765">
    <property type="term" value="P:photosynthesis, light harvesting"/>
    <property type="evidence" value="ECO:0007669"/>
    <property type="project" value="InterPro"/>
</dbReference>
<dbReference type="FunFam" id="1.10.3460.10:FF:000001">
    <property type="entry name" value="Chlorophyll a-b binding protein, chloroplastic"/>
    <property type="match status" value="1"/>
</dbReference>
<dbReference type="Gene3D" id="1.10.3460.10">
    <property type="entry name" value="Chlorophyll a/b binding protein domain"/>
    <property type="match status" value="1"/>
</dbReference>
<dbReference type="InterPro" id="IPR001344">
    <property type="entry name" value="Chloro_AB-bd_pln"/>
</dbReference>
<dbReference type="InterPro" id="IPR022796">
    <property type="entry name" value="Chloroa_b-bind"/>
</dbReference>
<dbReference type="PANTHER" id="PTHR21649">
    <property type="entry name" value="CHLOROPHYLL A/B BINDING PROTEIN"/>
    <property type="match status" value="1"/>
</dbReference>
<dbReference type="Pfam" id="PF00504">
    <property type="entry name" value="Chloroa_b-bind"/>
    <property type="match status" value="1"/>
</dbReference>
<dbReference type="SUPFAM" id="SSF103511">
    <property type="entry name" value="Chlorophyll a-b binding protein"/>
    <property type="match status" value="1"/>
</dbReference>